<accession>Q49Y06</accession>
<protein>
    <recommendedName>
        <fullName evidence="1">Putative pyruvate, phosphate dikinase regulatory protein 2</fullName>
        <shortName evidence="1">PPDK regulatory protein 2</shortName>
        <ecNumber evidence="1">2.7.11.32</ecNumber>
        <ecNumber evidence="1">2.7.4.27</ecNumber>
    </recommendedName>
</protein>
<gene>
    <name type="ordered locus">SSP1193</name>
</gene>
<comment type="function">
    <text evidence="1">Bifunctional serine/threonine kinase and phosphorylase involved in the regulation of the pyruvate, phosphate dikinase (PPDK) by catalyzing its phosphorylation/dephosphorylation.</text>
</comment>
<comment type="catalytic activity">
    <reaction evidence="1">
        <text>N(tele)-phospho-L-histidyl/L-threonyl-[pyruvate, phosphate dikinase] + ADP = N(tele)-phospho-L-histidyl/O-phospho-L-threonyl-[pyruvate, phosphate dikinase] + AMP + H(+)</text>
        <dbReference type="Rhea" id="RHEA:43692"/>
        <dbReference type="Rhea" id="RHEA-COMP:10650"/>
        <dbReference type="Rhea" id="RHEA-COMP:10651"/>
        <dbReference type="ChEBI" id="CHEBI:15378"/>
        <dbReference type="ChEBI" id="CHEBI:30013"/>
        <dbReference type="ChEBI" id="CHEBI:61977"/>
        <dbReference type="ChEBI" id="CHEBI:83586"/>
        <dbReference type="ChEBI" id="CHEBI:456215"/>
        <dbReference type="ChEBI" id="CHEBI:456216"/>
        <dbReference type="EC" id="2.7.11.32"/>
    </reaction>
</comment>
<comment type="catalytic activity">
    <reaction evidence="1">
        <text>N(tele)-phospho-L-histidyl/O-phospho-L-threonyl-[pyruvate, phosphate dikinase] + phosphate + H(+) = N(tele)-phospho-L-histidyl/L-threonyl-[pyruvate, phosphate dikinase] + diphosphate</text>
        <dbReference type="Rhea" id="RHEA:43696"/>
        <dbReference type="Rhea" id="RHEA-COMP:10650"/>
        <dbReference type="Rhea" id="RHEA-COMP:10651"/>
        <dbReference type="ChEBI" id="CHEBI:15378"/>
        <dbReference type="ChEBI" id="CHEBI:30013"/>
        <dbReference type="ChEBI" id="CHEBI:33019"/>
        <dbReference type="ChEBI" id="CHEBI:43474"/>
        <dbReference type="ChEBI" id="CHEBI:61977"/>
        <dbReference type="ChEBI" id="CHEBI:83586"/>
        <dbReference type="EC" id="2.7.4.27"/>
    </reaction>
</comment>
<comment type="similarity">
    <text evidence="1">Belongs to the pyruvate, phosphate/water dikinase regulatory protein family. PDRP subfamily.</text>
</comment>
<dbReference type="EC" id="2.7.11.32" evidence="1"/>
<dbReference type="EC" id="2.7.4.27" evidence="1"/>
<dbReference type="EMBL" id="AP008934">
    <property type="protein sequence ID" value="BAE18338.1"/>
    <property type="molecule type" value="Genomic_DNA"/>
</dbReference>
<dbReference type="RefSeq" id="WP_011303005.1">
    <property type="nucleotide sequence ID" value="NZ_MTGA01000038.1"/>
</dbReference>
<dbReference type="SMR" id="Q49Y06"/>
<dbReference type="GeneID" id="3616940"/>
<dbReference type="KEGG" id="ssp:SSP1193"/>
<dbReference type="PATRIC" id="fig|342451.11.peg.1191"/>
<dbReference type="eggNOG" id="COG1806">
    <property type="taxonomic scope" value="Bacteria"/>
</dbReference>
<dbReference type="HOGENOM" id="CLU_046206_2_1_9"/>
<dbReference type="OrthoDB" id="9782201at2"/>
<dbReference type="Proteomes" id="UP000006371">
    <property type="component" value="Chromosome"/>
</dbReference>
<dbReference type="GO" id="GO:0043531">
    <property type="term" value="F:ADP binding"/>
    <property type="evidence" value="ECO:0007669"/>
    <property type="project" value="UniProtKB-UniRule"/>
</dbReference>
<dbReference type="GO" id="GO:0005524">
    <property type="term" value="F:ATP binding"/>
    <property type="evidence" value="ECO:0007669"/>
    <property type="project" value="InterPro"/>
</dbReference>
<dbReference type="GO" id="GO:0016776">
    <property type="term" value="F:phosphotransferase activity, phosphate group as acceptor"/>
    <property type="evidence" value="ECO:0007669"/>
    <property type="project" value="UniProtKB-UniRule"/>
</dbReference>
<dbReference type="GO" id="GO:0004674">
    <property type="term" value="F:protein serine/threonine kinase activity"/>
    <property type="evidence" value="ECO:0007669"/>
    <property type="project" value="UniProtKB-UniRule"/>
</dbReference>
<dbReference type="HAMAP" id="MF_00921">
    <property type="entry name" value="PDRP"/>
    <property type="match status" value="1"/>
</dbReference>
<dbReference type="InterPro" id="IPR005177">
    <property type="entry name" value="Kinase-pyrophosphorylase"/>
</dbReference>
<dbReference type="InterPro" id="IPR026565">
    <property type="entry name" value="PPDK_reg"/>
</dbReference>
<dbReference type="NCBIfam" id="NF003742">
    <property type="entry name" value="PRK05339.1"/>
    <property type="match status" value="1"/>
</dbReference>
<dbReference type="PANTHER" id="PTHR31756">
    <property type="entry name" value="PYRUVATE, PHOSPHATE DIKINASE REGULATORY PROTEIN 1, CHLOROPLASTIC"/>
    <property type="match status" value="1"/>
</dbReference>
<dbReference type="PANTHER" id="PTHR31756:SF3">
    <property type="entry name" value="PYRUVATE, PHOSPHATE DIKINASE REGULATORY PROTEIN 1, CHLOROPLASTIC"/>
    <property type="match status" value="1"/>
</dbReference>
<dbReference type="Pfam" id="PF03618">
    <property type="entry name" value="Kinase-PPPase"/>
    <property type="match status" value="1"/>
</dbReference>
<evidence type="ECO:0000255" key="1">
    <source>
        <dbReference type="HAMAP-Rule" id="MF_00921"/>
    </source>
</evidence>
<reference key="1">
    <citation type="journal article" date="2005" name="Proc. Natl. Acad. Sci. U.S.A.">
        <title>Whole genome sequence of Staphylococcus saprophyticus reveals the pathogenesis of uncomplicated urinary tract infection.</title>
        <authorList>
            <person name="Kuroda M."/>
            <person name="Yamashita A."/>
            <person name="Hirakawa H."/>
            <person name="Kumano M."/>
            <person name="Morikawa K."/>
            <person name="Higashide M."/>
            <person name="Maruyama A."/>
            <person name="Inose Y."/>
            <person name="Matoba K."/>
            <person name="Toh H."/>
            <person name="Kuhara S."/>
            <person name="Hattori M."/>
            <person name="Ohta T."/>
        </authorList>
    </citation>
    <scope>NUCLEOTIDE SEQUENCE [LARGE SCALE GENOMIC DNA]</scope>
    <source>
        <strain>ATCC 15305 / DSM 20229 / NCIMB 8711 / NCTC 7292 / S-41</strain>
    </source>
</reference>
<feature type="chain" id="PRO_0000196728" description="Putative pyruvate, phosphate dikinase regulatory protein 2">
    <location>
        <begin position="1"/>
        <end position="273"/>
    </location>
</feature>
<feature type="binding site" evidence="1">
    <location>
        <begin position="151"/>
        <end position="158"/>
    </location>
    <ligand>
        <name>ADP</name>
        <dbReference type="ChEBI" id="CHEBI:456216"/>
    </ligand>
</feature>
<organism>
    <name type="scientific">Staphylococcus saprophyticus subsp. saprophyticus (strain ATCC 15305 / DSM 20229 / NCIMB 8711 / NCTC 7292 / S-41)</name>
    <dbReference type="NCBI Taxonomy" id="342451"/>
    <lineage>
        <taxon>Bacteria</taxon>
        <taxon>Bacillati</taxon>
        <taxon>Bacillota</taxon>
        <taxon>Bacilli</taxon>
        <taxon>Bacillales</taxon>
        <taxon>Staphylococcaceae</taxon>
        <taxon>Staphylococcus</taxon>
    </lineage>
</organism>
<keyword id="KW-0418">Kinase</keyword>
<keyword id="KW-0547">Nucleotide-binding</keyword>
<keyword id="KW-1185">Reference proteome</keyword>
<keyword id="KW-0723">Serine/threonine-protein kinase</keyword>
<keyword id="KW-0808">Transferase</keyword>
<sequence>MKNIQIIVASDSVGETAELVARACISQFNPKQCESEISRYPYIEALENVDEVISVAKDTEAIVVYTLVKPEIRKYMEAKLAEFKIKAVDIMGPLMNILLDQIDEKPYFEPGLVHQLDEAYFKKIDAIEFAVKYDDGKDPKGLFKADIVLLGISRTSKTPLSQYLAHKSYKVMNIPIVPEVTPPDDLFNIDSSKCIALKISEEKLNRIRKERLRQLGLGESARYATEQRIEEELNYFHELVDKIGCPIIDVSDKAIEETANDIISLIEQNNFKN</sequence>
<name>PDRP2_STAS1</name>
<proteinExistence type="inferred from homology"/>